<feature type="chain" id="PRO_0000136593" description="Fructoselysine 6-phosphate deglycase">
    <location>
        <begin position="1"/>
        <end position="340"/>
    </location>
</feature>
<feature type="domain" description="SIS 1" evidence="1">
    <location>
        <begin position="35"/>
        <end position="169"/>
    </location>
</feature>
<feature type="domain" description="SIS 2" evidence="1">
    <location>
        <begin position="201"/>
        <end position="331"/>
    </location>
</feature>
<dbReference type="EC" id="3.5.-.-" evidence="2"/>
<dbReference type="EMBL" id="U18997">
    <property type="protein sequence ID" value="AAA58168.1"/>
    <property type="status" value="ALT_INIT"/>
    <property type="molecule type" value="Genomic_DNA"/>
</dbReference>
<dbReference type="EMBL" id="U00096">
    <property type="protein sequence ID" value="AAC76396.2"/>
    <property type="molecule type" value="Genomic_DNA"/>
</dbReference>
<dbReference type="EMBL" id="AP009048">
    <property type="protein sequence ID" value="BAE77919.1"/>
    <property type="molecule type" value="Genomic_DNA"/>
</dbReference>
<dbReference type="PIR" id="F65131">
    <property type="entry name" value="F65131"/>
</dbReference>
<dbReference type="RefSeq" id="NP_417830.4">
    <property type="nucleotide sequence ID" value="NC_000913.3"/>
</dbReference>
<dbReference type="RefSeq" id="WP_001295163.1">
    <property type="nucleotide sequence ID" value="NZ_STEB01000004.1"/>
</dbReference>
<dbReference type="SMR" id="P0AC00"/>
<dbReference type="BioGRID" id="4262480">
    <property type="interactions" value="221"/>
</dbReference>
<dbReference type="FunCoup" id="P0AC00">
    <property type="interactions" value="118"/>
</dbReference>
<dbReference type="STRING" id="511145.b3371"/>
<dbReference type="PaxDb" id="511145-b3371"/>
<dbReference type="EnsemblBacteria" id="AAC76396">
    <property type="protein sequence ID" value="AAC76396"/>
    <property type="gene ID" value="b3371"/>
</dbReference>
<dbReference type="GeneID" id="947875"/>
<dbReference type="KEGG" id="ecj:JW5700"/>
<dbReference type="KEGG" id="eco:b3371"/>
<dbReference type="KEGG" id="ecoc:C3026_18305"/>
<dbReference type="PATRIC" id="fig|1411691.4.peg.3358"/>
<dbReference type="EchoBASE" id="EB2746"/>
<dbReference type="eggNOG" id="COG2222">
    <property type="taxonomic scope" value="Bacteria"/>
</dbReference>
<dbReference type="HOGENOM" id="CLU_012520_3_0_6"/>
<dbReference type="InParanoid" id="P0AC00"/>
<dbReference type="OMA" id="ILMEMQW"/>
<dbReference type="OrthoDB" id="9782098at2"/>
<dbReference type="PhylomeDB" id="P0AC00"/>
<dbReference type="BioCyc" id="EcoCyc:G7723-MONOMER"/>
<dbReference type="BioCyc" id="MetaCyc:G7723-MONOMER"/>
<dbReference type="SABIO-RK" id="P0AC00"/>
<dbReference type="UniPathway" id="UPA00784">
    <property type="reaction ID" value="UER00770"/>
</dbReference>
<dbReference type="PRO" id="PR:P0AC00"/>
<dbReference type="Proteomes" id="UP000000625">
    <property type="component" value="Chromosome"/>
</dbReference>
<dbReference type="GO" id="GO:0097367">
    <property type="term" value="F:carbohydrate derivative binding"/>
    <property type="evidence" value="ECO:0007669"/>
    <property type="project" value="InterPro"/>
</dbReference>
<dbReference type="GO" id="GO:0004360">
    <property type="term" value="F:glutamine-fructose-6-phosphate transaminase (isomerizing) activity"/>
    <property type="evidence" value="ECO:0000318"/>
    <property type="project" value="GO_Central"/>
</dbReference>
<dbReference type="GO" id="GO:0016836">
    <property type="term" value="F:hydro-lyase activity"/>
    <property type="evidence" value="ECO:0000314"/>
    <property type="project" value="EcoCyc"/>
</dbReference>
<dbReference type="GO" id="GO:0016787">
    <property type="term" value="F:hydrolase activity"/>
    <property type="evidence" value="ECO:0007669"/>
    <property type="project" value="UniProtKB-KW"/>
</dbReference>
<dbReference type="GO" id="GO:0042802">
    <property type="term" value="F:identical protein binding"/>
    <property type="evidence" value="ECO:0000314"/>
    <property type="project" value="EcoCyc"/>
</dbReference>
<dbReference type="GO" id="GO:0006002">
    <property type="term" value="P:fructose 6-phosphate metabolic process"/>
    <property type="evidence" value="ECO:0000318"/>
    <property type="project" value="GO_Central"/>
</dbReference>
<dbReference type="GO" id="GO:0006487">
    <property type="term" value="P:protein N-linked glycosylation"/>
    <property type="evidence" value="ECO:0000318"/>
    <property type="project" value="GO_Central"/>
</dbReference>
<dbReference type="GO" id="GO:0006047">
    <property type="term" value="P:UDP-N-acetylglucosamine metabolic process"/>
    <property type="evidence" value="ECO:0000318"/>
    <property type="project" value="GO_Central"/>
</dbReference>
<dbReference type="CDD" id="cd05009">
    <property type="entry name" value="SIS_GlmS_GlmD_2"/>
    <property type="match status" value="1"/>
</dbReference>
<dbReference type="FunFam" id="3.40.50.10490:FF:000034">
    <property type="entry name" value="Fructoselysine 6-phosphate deglycase"/>
    <property type="match status" value="1"/>
</dbReference>
<dbReference type="Gene3D" id="3.40.50.10490">
    <property type="entry name" value="Glucose-6-phosphate isomerase like protein, domain 1"/>
    <property type="match status" value="2"/>
</dbReference>
<dbReference type="InterPro" id="IPR035490">
    <property type="entry name" value="GlmS/FrlB_SIS"/>
</dbReference>
<dbReference type="InterPro" id="IPR001347">
    <property type="entry name" value="SIS_dom"/>
</dbReference>
<dbReference type="InterPro" id="IPR046348">
    <property type="entry name" value="SIS_dom_sf"/>
</dbReference>
<dbReference type="NCBIfam" id="NF008481">
    <property type="entry name" value="PRK11382.1"/>
    <property type="match status" value="1"/>
</dbReference>
<dbReference type="PANTHER" id="PTHR10937:SF14">
    <property type="entry name" value="FRUCTOSELYSINE 6-PHOSPHATE DEGLYCASE"/>
    <property type="match status" value="1"/>
</dbReference>
<dbReference type="PANTHER" id="PTHR10937">
    <property type="entry name" value="GLUCOSAMINE--FRUCTOSE-6-PHOSPHATE AMINOTRANSFERASE, ISOMERIZING"/>
    <property type="match status" value="1"/>
</dbReference>
<dbReference type="Pfam" id="PF01380">
    <property type="entry name" value="SIS"/>
    <property type="match status" value="1"/>
</dbReference>
<dbReference type="SUPFAM" id="SSF53697">
    <property type="entry name" value="SIS domain"/>
    <property type="match status" value="1"/>
</dbReference>
<dbReference type="PROSITE" id="PS51464">
    <property type="entry name" value="SIS"/>
    <property type="match status" value="2"/>
</dbReference>
<reference key="1">
    <citation type="journal article" date="1997" name="Science">
        <title>The complete genome sequence of Escherichia coli K-12.</title>
        <authorList>
            <person name="Blattner F.R."/>
            <person name="Plunkett G. III"/>
            <person name="Bloch C.A."/>
            <person name="Perna N.T."/>
            <person name="Burland V."/>
            <person name="Riley M."/>
            <person name="Collado-Vides J."/>
            <person name="Glasner J.D."/>
            <person name="Rode C.K."/>
            <person name="Mayhew G.F."/>
            <person name="Gregor J."/>
            <person name="Davis N.W."/>
            <person name="Kirkpatrick H.A."/>
            <person name="Goeden M.A."/>
            <person name="Rose D.J."/>
            <person name="Mau B."/>
            <person name="Shao Y."/>
        </authorList>
    </citation>
    <scope>NUCLEOTIDE SEQUENCE [LARGE SCALE GENOMIC DNA]</scope>
    <source>
        <strain>K12 / MG1655 / ATCC 47076</strain>
    </source>
</reference>
<reference key="2">
    <citation type="journal article" date="2006" name="Mol. Syst. Biol.">
        <title>Highly accurate genome sequences of Escherichia coli K-12 strains MG1655 and W3110.</title>
        <authorList>
            <person name="Hayashi K."/>
            <person name="Morooka N."/>
            <person name="Yamamoto Y."/>
            <person name="Fujita K."/>
            <person name="Isono K."/>
            <person name="Choi S."/>
            <person name="Ohtsubo E."/>
            <person name="Baba T."/>
            <person name="Wanner B.L."/>
            <person name="Mori H."/>
            <person name="Horiuchi T."/>
        </authorList>
    </citation>
    <scope>NUCLEOTIDE SEQUENCE [LARGE SCALE GENOMIC DNA]</scope>
    <source>
        <strain>K12 / W3110 / ATCC 27325 / DSM 5911</strain>
    </source>
</reference>
<reference key="3">
    <citation type="journal article" date="2002" name="J. Biol. Chem.">
        <title>Identification of a pathway for the utilization of the Amadori product fructoselysine in Escherichia coli.</title>
        <authorList>
            <person name="Wiame E."/>
            <person name="Delpierre G."/>
            <person name="Collard F."/>
            <person name="Van Schaftingen E."/>
        </authorList>
    </citation>
    <scope>FUNCTION</scope>
    <scope>CATALYTIC ACTIVITY</scope>
    <scope>BIOPHYSICOCHEMICAL PROPERTIES</scope>
    <scope>ACTIVITY REGULATION</scope>
    <scope>PATHWAY</scope>
    <scope>INDUCTION</scope>
    <scope>SUBUNIT</scope>
</reference>
<reference key="4">
    <citation type="journal article" date="2004" name="Biochem. J.">
        <title>Fructoselysine 3-epimerase, an enzyme involved in the metabolism of the unusual Amadori compound psicoselysine in Escherichia coli.</title>
        <authorList>
            <person name="Wiame E."/>
            <person name="Van Schaftingen E."/>
        </authorList>
    </citation>
    <scope>FUNCTION</scope>
    <scope>DISRUPTION PHENOTYPE</scope>
    <scope>PATHWAY</scope>
    <scope>INDUCTION</scope>
</reference>
<accession>P0AC00</accession>
<accession>P45540</accession>
<accession>Q2M737</accession>
<evidence type="ECO:0000255" key="1">
    <source>
        <dbReference type="PROSITE-ProRule" id="PRU00797"/>
    </source>
</evidence>
<evidence type="ECO:0000269" key="2">
    <source>
    </source>
</evidence>
<evidence type="ECO:0000269" key="3">
    <source>
    </source>
</evidence>
<evidence type="ECO:0000303" key="4">
    <source>
    </source>
</evidence>
<evidence type="ECO:0000305" key="5"/>
<evidence type="ECO:0000305" key="6">
    <source>
    </source>
</evidence>
<proteinExistence type="evidence at protein level"/>
<organism>
    <name type="scientific">Escherichia coli (strain K12)</name>
    <dbReference type="NCBI Taxonomy" id="83333"/>
    <lineage>
        <taxon>Bacteria</taxon>
        <taxon>Pseudomonadati</taxon>
        <taxon>Pseudomonadota</taxon>
        <taxon>Gammaproteobacteria</taxon>
        <taxon>Enterobacterales</taxon>
        <taxon>Enterobacteriaceae</taxon>
        <taxon>Escherichia</taxon>
    </lineage>
</organism>
<keyword id="KW-0378">Hydrolase</keyword>
<keyword id="KW-1185">Reference proteome</keyword>
<keyword id="KW-0677">Repeat</keyword>
<gene>
    <name evidence="4" type="primary">frlB</name>
    <name type="synonym">yhfN</name>
    <name type="ordered locus">b3371</name>
    <name type="ordered locus">JW5700</name>
</gene>
<sequence length="340" mass="38569">MLDIDKSTVDFLVTENMVQEVEKVLSHDVPLVHAIVEEMVKRDIDRIYFVACGSPLNAAQTAKHLADRFSDLQVYAISGWEFCDNTPYRLDDRCAVIGVSDYGKTEEVIKALELGRACGALTAAFTKRADSPITSAAEFSIDYQADCIWEIHLLLCYSVVLEMITRLAPNAEIGKIKNDLKQLPNALGHLVRTWEEKGRQLGELASQWPMIYTVAAGPLRPLGYKEGIVTLMEFTWTHGCVIESGEFRHGPLEIVEPGVPFLFLLGNDESRHTTERAINFVKQRTDNVIVIDYAEISQGLHPWLAPFLMFVPMEWLCYYLSIYKDHNPDERRYYGGLVEY</sequence>
<protein>
    <recommendedName>
        <fullName evidence="4">Fructoselysine 6-phosphate deglycase</fullName>
        <ecNumber evidence="2">3.5.-.-</ecNumber>
    </recommendedName>
</protein>
<name>FRLB_ECOLI</name>
<comment type="function">
    <text evidence="2 3">Catalyzes the reversible conversion of fructoselysine 6-phosphate to glucose 6-phosphate and lysine (PubMed:12147680). Functions in a fructoselysine degradation pathway that allows E.coli to grow on fructoselysine or psicoselysine (PubMed:14641112).</text>
</comment>
<comment type="catalytic activity">
    <reaction evidence="2">
        <text>N(6)-(6-phospho-D-fructosyl)-L-lysine + H2O = D-glucose 6-phosphate + L-lysine</text>
        <dbReference type="Rhea" id="RHEA:28382"/>
        <dbReference type="ChEBI" id="CHEBI:15377"/>
        <dbReference type="ChEBI" id="CHEBI:32551"/>
        <dbReference type="ChEBI" id="CHEBI:61392"/>
        <dbReference type="ChEBI" id="CHEBI:61548"/>
    </reaction>
</comment>
<comment type="activity regulation">
    <text evidence="2">Strongly inhibited by ZnCl(2).</text>
</comment>
<comment type="biophysicochemical properties">
    <kinetics>
        <KM evidence="2">0.4 mM for fructoselysine 6-phosphate</KM>
    </kinetics>
</comment>
<comment type="pathway">
    <text evidence="3 6">Carbohydrate metabolism; fructoselysine degradation; D-glucose 6-phosphate and lysine from fructoselysine: step 2/2.</text>
</comment>
<comment type="subunit">
    <text evidence="2">Homododecamer.</text>
</comment>
<comment type="induction">
    <text evidence="2 3">Induced by fructoselysine and psicoselysine. Makes part of the frl operon with FrlA, FrlC, FrlD and FrlR.</text>
</comment>
<comment type="disruption phenotype">
    <text evidence="3">Cells lacking this gene are unable to grow on fructoselysine or psicoselysine, where they do grow on glucose.</text>
</comment>
<comment type="sequence caution" evidence="5">
    <conflict type="erroneous initiation">
        <sequence resource="EMBL-CDS" id="AAA58168"/>
    </conflict>
    <text>Extended N-terminus.</text>
</comment>